<sequence>MQLFDLPLDQLQTYKPEKTAPKDFSEFWKLSLEELAKVQAEPDLQPVDYPADGVKVYRLTYKSFGNARITGWYAVPDKEGPHPAIVKYHGYNASYDGEIHEMVNWALHGYATFGMLVRGQQSSEDTSISPHGHALGWMTKGILDKDTYYYRGVYLDAVRALEVISSFDEVDETRIGVTGGSQGGGLTIAAAALSDIPKAAVADYPYLSNFERAIDVALEQPYLEINSFFRRNGSPETEVQAMKTLSYFDIMNLADRVKVPVLMSIGLIDKVTPPSTVFAAYNHLETKKELKVYRYFGHEYIPAFQTEKLAFFKQHLKG</sequence>
<gene>
    <name type="primary">cah</name>
    <name type="ordered locus">BSU03180</name>
</gene>
<proteinExistence type="evidence at protein level"/>
<comment type="function">
    <text evidence="1">Esterase that removed acetyl groups from a number of O-acetylated small substrates, such as acetylated xylose, short xylooligosaccharides and cephalosporin C. Has no activity towards polymeric acetylated xylan. Cannot cleave amide linkages.</text>
</comment>
<comment type="catalytic activity">
    <reaction evidence="1">
        <text>Deacetylation of xylans and xylo-oligosaccharides.</text>
        <dbReference type="EC" id="3.1.1.72"/>
    </reaction>
</comment>
<comment type="catalytic activity">
    <reaction evidence="1">
        <text>cephalosporin C + H2O = deacetylcephalosporin C + acetate + H(+)</text>
        <dbReference type="Rhea" id="RHEA:22596"/>
        <dbReference type="ChEBI" id="CHEBI:15377"/>
        <dbReference type="ChEBI" id="CHEBI:15378"/>
        <dbReference type="ChEBI" id="CHEBI:30089"/>
        <dbReference type="ChEBI" id="CHEBI:57511"/>
        <dbReference type="ChEBI" id="CHEBI:58366"/>
        <dbReference type="EC" id="3.1.1.41"/>
    </reaction>
</comment>
<comment type="subunit">
    <text evidence="1 2">Homohexamer.</text>
</comment>
<comment type="subcellular location">
    <subcellularLocation>
        <location evidence="3">Cytoplasm</location>
    </subcellularLocation>
</comment>
<comment type="biotechnology">
    <text evidence="1">Used in the pharmaceutical industry for the chemoenzymatic deacetylation of cephalosporins and the synthesis of novel antibiotics.</text>
</comment>
<comment type="similarity">
    <text evidence="3">Belongs to the carbohydrate esterase 7 family.</text>
</comment>
<feature type="chain" id="PRO_0000360523" description="Cephalosporin-C deacetylase">
    <location>
        <begin position="1"/>
        <end position="318"/>
    </location>
</feature>
<feature type="active site" description="Nucleophile">
    <location>
        <position position="181"/>
    </location>
</feature>
<feature type="active site" description="Charge relay system">
    <location>
        <position position="269"/>
    </location>
</feature>
<feature type="active site" description="Charge relay system">
    <location>
        <position position="298"/>
    </location>
</feature>
<feature type="binding site">
    <location>
        <position position="91"/>
    </location>
    <ligand>
        <name>substrate</name>
    </ligand>
</feature>
<feature type="mutagenesis site" description="Loss of activity.">
    <original>S</original>
    <variation>A</variation>
    <location>
        <position position="181"/>
    </location>
</feature>
<feature type="helix" evidence="4">
    <location>
        <begin position="8"/>
        <end position="12"/>
    </location>
</feature>
<feature type="helix" evidence="4">
    <location>
        <begin position="24"/>
        <end position="36"/>
    </location>
</feature>
<feature type="strand" evidence="4">
    <location>
        <begin position="43"/>
        <end position="47"/>
    </location>
</feature>
<feature type="strand" evidence="4">
    <location>
        <begin position="52"/>
        <end position="63"/>
    </location>
</feature>
<feature type="helix" evidence="4">
    <location>
        <begin position="64"/>
        <end position="66"/>
    </location>
</feature>
<feature type="strand" evidence="4">
    <location>
        <begin position="67"/>
        <end position="78"/>
    </location>
</feature>
<feature type="strand" evidence="4">
    <location>
        <begin position="82"/>
        <end position="88"/>
    </location>
</feature>
<feature type="helix" evidence="4">
    <location>
        <begin position="96"/>
        <end position="98"/>
    </location>
</feature>
<feature type="helix" evidence="4">
    <location>
        <begin position="99"/>
        <end position="107"/>
    </location>
</feature>
<feature type="strand" evidence="4">
    <location>
        <begin position="111"/>
        <end position="115"/>
    </location>
</feature>
<feature type="turn" evidence="4">
    <location>
        <begin position="118"/>
        <end position="120"/>
    </location>
</feature>
<feature type="strand" evidence="4">
    <location>
        <begin position="121"/>
        <end position="123"/>
    </location>
</feature>
<feature type="strand" evidence="5">
    <location>
        <begin position="129"/>
        <end position="131"/>
    </location>
</feature>
<feature type="strand" evidence="4">
    <location>
        <begin position="134"/>
        <end position="137"/>
    </location>
</feature>
<feature type="turn" evidence="4">
    <location>
        <begin position="138"/>
        <end position="143"/>
    </location>
</feature>
<feature type="turn" evidence="4">
    <location>
        <begin position="145"/>
        <end position="147"/>
    </location>
</feature>
<feature type="helix" evidence="4">
    <location>
        <begin position="149"/>
        <end position="166"/>
    </location>
</feature>
<feature type="strand" evidence="4">
    <location>
        <begin position="170"/>
        <end position="180"/>
    </location>
</feature>
<feature type="helix" evidence="4">
    <location>
        <begin position="182"/>
        <end position="193"/>
    </location>
</feature>
<feature type="strand" evidence="4">
    <location>
        <begin position="198"/>
        <end position="204"/>
    </location>
</feature>
<feature type="helix" evidence="4">
    <location>
        <begin position="210"/>
        <end position="216"/>
    </location>
</feature>
<feature type="turn" evidence="4">
    <location>
        <begin position="220"/>
        <end position="223"/>
    </location>
</feature>
<feature type="helix" evidence="4">
    <location>
        <begin position="224"/>
        <end position="231"/>
    </location>
</feature>
<feature type="helix" evidence="4">
    <location>
        <begin position="235"/>
        <end position="246"/>
    </location>
</feature>
<feature type="helix" evidence="4">
    <location>
        <begin position="250"/>
        <end position="253"/>
    </location>
</feature>
<feature type="helix" evidence="4">
    <location>
        <begin position="254"/>
        <end position="256"/>
    </location>
</feature>
<feature type="strand" evidence="4">
    <location>
        <begin position="261"/>
        <end position="266"/>
    </location>
</feature>
<feature type="strand" evidence="4">
    <location>
        <begin position="270"/>
        <end position="272"/>
    </location>
</feature>
<feature type="helix" evidence="4">
    <location>
        <begin position="274"/>
        <end position="283"/>
    </location>
</feature>
<feature type="strand" evidence="4">
    <location>
        <begin position="286"/>
        <end position="293"/>
    </location>
</feature>
<feature type="helix" evidence="4">
    <location>
        <begin position="302"/>
        <end position="316"/>
    </location>
</feature>
<protein>
    <recommendedName>
        <fullName>Cephalosporin-C deacetylase</fullName>
        <ecNumber>3.1.1.41</ecNumber>
    </recommendedName>
    <alternativeName>
        <fullName>Acetylxylan esterase</fullName>
        <ecNumber>3.1.1.72</ecNumber>
    </alternativeName>
</protein>
<dbReference type="EC" id="3.1.1.41"/>
<dbReference type="EC" id="3.1.1.72"/>
<dbReference type="EMBL" id="D50453">
    <property type="protein sequence ID" value="BAA08952.1"/>
    <property type="molecule type" value="Genomic_DNA"/>
</dbReference>
<dbReference type="EMBL" id="AL009126">
    <property type="protein sequence ID" value="CAB12112.1"/>
    <property type="molecule type" value="Genomic_DNA"/>
</dbReference>
<dbReference type="PIR" id="G69596">
    <property type="entry name" value="G69596"/>
</dbReference>
<dbReference type="RefSeq" id="NP_388200.1">
    <property type="nucleotide sequence ID" value="NC_000964.3"/>
</dbReference>
<dbReference type="RefSeq" id="WP_003246400.1">
    <property type="nucleotide sequence ID" value="NZ_OZ025638.1"/>
</dbReference>
<dbReference type="PDB" id="1L7A">
    <property type="method" value="X-ray"/>
    <property type="resolution" value="1.50 A"/>
    <property type="chains" value="A/B=1-318"/>
</dbReference>
<dbReference type="PDB" id="1ODS">
    <property type="method" value="X-ray"/>
    <property type="resolution" value="1.90 A"/>
    <property type="chains" value="A/B/C/D/E/F/G/H=1-318"/>
</dbReference>
<dbReference type="PDB" id="1ODT">
    <property type="method" value="X-ray"/>
    <property type="resolution" value="1.70 A"/>
    <property type="chains" value="C/H=1-318"/>
</dbReference>
<dbReference type="PDBsum" id="1L7A"/>
<dbReference type="PDBsum" id="1ODS"/>
<dbReference type="PDBsum" id="1ODT"/>
<dbReference type="SMR" id="P94388"/>
<dbReference type="FunCoup" id="P94388">
    <property type="interactions" value="125"/>
</dbReference>
<dbReference type="STRING" id="224308.BSU03180"/>
<dbReference type="ESTHER" id="bacsu-CAH">
    <property type="family name" value="Acetyl-esterase_deacetylase"/>
</dbReference>
<dbReference type="MEROPS" id="S09.949"/>
<dbReference type="PaxDb" id="224308-BSU03180"/>
<dbReference type="EnsemblBacteria" id="CAB12112">
    <property type="protein sequence ID" value="CAB12112"/>
    <property type="gene ID" value="BSU_03180"/>
</dbReference>
<dbReference type="GeneID" id="938341"/>
<dbReference type="KEGG" id="bsu:BSU03180"/>
<dbReference type="PATRIC" id="fig|224308.179.peg.332"/>
<dbReference type="eggNOG" id="COG3458">
    <property type="taxonomic scope" value="Bacteria"/>
</dbReference>
<dbReference type="InParanoid" id="P94388"/>
<dbReference type="OrthoDB" id="9770528at2"/>
<dbReference type="BioCyc" id="BSUB:BSU03180-MONOMER"/>
<dbReference type="BRENDA" id="3.1.1.41">
    <property type="organism ID" value="658"/>
</dbReference>
<dbReference type="SABIO-RK" id="P94388"/>
<dbReference type="EvolutionaryTrace" id="P94388"/>
<dbReference type="Proteomes" id="UP000001570">
    <property type="component" value="Chromosome"/>
</dbReference>
<dbReference type="GO" id="GO:0005737">
    <property type="term" value="C:cytoplasm"/>
    <property type="evidence" value="ECO:0007669"/>
    <property type="project" value="UniProtKB-SubCell"/>
</dbReference>
<dbReference type="GO" id="GO:0046555">
    <property type="term" value="F:acetylxylan esterase activity"/>
    <property type="evidence" value="ECO:0007669"/>
    <property type="project" value="UniProtKB-EC"/>
</dbReference>
<dbReference type="GO" id="GO:0052689">
    <property type="term" value="F:carboxylic ester hydrolase activity"/>
    <property type="evidence" value="ECO:0000318"/>
    <property type="project" value="GO_Central"/>
</dbReference>
<dbReference type="GO" id="GO:0047739">
    <property type="term" value="F:cephalosporin-C deacetylase activity"/>
    <property type="evidence" value="ECO:0007669"/>
    <property type="project" value="UniProtKB-EC"/>
</dbReference>
<dbReference type="GO" id="GO:0030245">
    <property type="term" value="P:cellulose catabolic process"/>
    <property type="evidence" value="ECO:0007669"/>
    <property type="project" value="UniProtKB-KW"/>
</dbReference>
<dbReference type="GO" id="GO:0005976">
    <property type="term" value="P:polysaccharide metabolic process"/>
    <property type="evidence" value="ECO:0000318"/>
    <property type="project" value="GO_Central"/>
</dbReference>
<dbReference type="Gene3D" id="3.40.50.1820">
    <property type="entry name" value="alpha/beta hydrolase"/>
    <property type="match status" value="1"/>
</dbReference>
<dbReference type="InterPro" id="IPR029058">
    <property type="entry name" value="AB_hydrolase_fold"/>
</dbReference>
<dbReference type="InterPro" id="IPR008391">
    <property type="entry name" value="AXE1_dom"/>
</dbReference>
<dbReference type="InterPro" id="IPR039069">
    <property type="entry name" value="CE7"/>
</dbReference>
<dbReference type="PANTHER" id="PTHR40111">
    <property type="entry name" value="CEPHALOSPORIN-C DEACETYLASE"/>
    <property type="match status" value="1"/>
</dbReference>
<dbReference type="PANTHER" id="PTHR40111:SF1">
    <property type="entry name" value="CEPHALOSPORIN-C DEACETYLASE"/>
    <property type="match status" value="1"/>
</dbReference>
<dbReference type="Pfam" id="PF05448">
    <property type="entry name" value="AXE1"/>
    <property type="match status" value="1"/>
</dbReference>
<dbReference type="SUPFAM" id="SSF53474">
    <property type="entry name" value="alpha/beta-Hydrolases"/>
    <property type="match status" value="1"/>
</dbReference>
<reference key="1">
    <citation type="journal article" date="1996" name="Microbiology">
        <title>The 25 degrees-36 degrees region of the Bacillus subtilis chromosome: determination of the sequence of a 146 kb segment and identification of 113 genes.</title>
        <authorList>
            <person name="Yamane K."/>
            <person name="Kumano M."/>
            <person name="Kurita K."/>
        </authorList>
    </citation>
    <scope>NUCLEOTIDE SEQUENCE [GENOMIC DNA]</scope>
    <source>
        <strain>168</strain>
    </source>
</reference>
<reference key="2">
    <citation type="journal article" date="1997" name="Nature">
        <title>The complete genome sequence of the Gram-positive bacterium Bacillus subtilis.</title>
        <authorList>
            <person name="Kunst F."/>
            <person name="Ogasawara N."/>
            <person name="Moszer I."/>
            <person name="Albertini A.M."/>
            <person name="Alloni G."/>
            <person name="Azevedo V."/>
            <person name="Bertero M.G."/>
            <person name="Bessieres P."/>
            <person name="Bolotin A."/>
            <person name="Borchert S."/>
            <person name="Borriss R."/>
            <person name="Boursier L."/>
            <person name="Brans A."/>
            <person name="Braun M."/>
            <person name="Brignell S.C."/>
            <person name="Bron S."/>
            <person name="Brouillet S."/>
            <person name="Bruschi C.V."/>
            <person name="Caldwell B."/>
            <person name="Capuano V."/>
            <person name="Carter N.M."/>
            <person name="Choi S.-K."/>
            <person name="Codani J.-J."/>
            <person name="Connerton I.F."/>
            <person name="Cummings N.J."/>
            <person name="Daniel R.A."/>
            <person name="Denizot F."/>
            <person name="Devine K.M."/>
            <person name="Duesterhoeft A."/>
            <person name="Ehrlich S.D."/>
            <person name="Emmerson P.T."/>
            <person name="Entian K.-D."/>
            <person name="Errington J."/>
            <person name="Fabret C."/>
            <person name="Ferrari E."/>
            <person name="Foulger D."/>
            <person name="Fritz C."/>
            <person name="Fujita M."/>
            <person name="Fujita Y."/>
            <person name="Fuma S."/>
            <person name="Galizzi A."/>
            <person name="Galleron N."/>
            <person name="Ghim S.-Y."/>
            <person name="Glaser P."/>
            <person name="Goffeau A."/>
            <person name="Golightly E.J."/>
            <person name="Grandi G."/>
            <person name="Guiseppi G."/>
            <person name="Guy B.J."/>
            <person name="Haga K."/>
            <person name="Haiech J."/>
            <person name="Harwood C.R."/>
            <person name="Henaut A."/>
            <person name="Hilbert H."/>
            <person name="Holsappel S."/>
            <person name="Hosono S."/>
            <person name="Hullo M.-F."/>
            <person name="Itaya M."/>
            <person name="Jones L.-M."/>
            <person name="Joris B."/>
            <person name="Karamata D."/>
            <person name="Kasahara Y."/>
            <person name="Klaerr-Blanchard M."/>
            <person name="Klein C."/>
            <person name="Kobayashi Y."/>
            <person name="Koetter P."/>
            <person name="Koningstein G."/>
            <person name="Krogh S."/>
            <person name="Kumano M."/>
            <person name="Kurita K."/>
            <person name="Lapidus A."/>
            <person name="Lardinois S."/>
            <person name="Lauber J."/>
            <person name="Lazarevic V."/>
            <person name="Lee S.-M."/>
            <person name="Levine A."/>
            <person name="Liu H."/>
            <person name="Masuda S."/>
            <person name="Mauel C."/>
            <person name="Medigue C."/>
            <person name="Medina N."/>
            <person name="Mellado R.P."/>
            <person name="Mizuno M."/>
            <person name="Moestl D."/>
            <person name="Nakai S."/>
            <person name="Noback M."/>
            <person name="Noone D."/>
            <person name="O'Reilly M."/>
            <person name="Ogawa K."/>
            <person name="Ogiwara A."/>
            <person name="Oudega B."/>
            <person name="Park S.-H."/>
            <person name="Parro V."/>
            <person name="Pohl T.M."/>
            <person name="Portetelle D."/>
            <person name="Porwollik S."/>
            <person name="Prescott A.M."/>
            <person name="Presecan E."/>
            <person name="Pujic P."/>
            <person name="Purnelle B."/>
            <person name="Rapoport G."/>
            <person name="Rey M."/>
            <person name="Reynolds S."/>
            <person name="Rieger M."/>
            <person name="Rivolta C."/>
            <person name="Rocha E."/>
            <person name="Roche B."/>
            <person name="Rose M."/>
            <person name="Sadaie Y."/>
            <person name="Sato T."/>
            <person name="Scanlan E."/>
            <person name="Schleich S."/>
            <person name="Schroeter R."/>
            <person name="Scoffone F."/>
            <person name="Sekiguchi J."/>
            <person name="Sekowska A."/>
            <person name="Seror S.J."/>
            <person name="Serror P."/>
            <person name="Shin B.-S."/>
            <person name="Soldo B."/>
            <person name="Sorokin A."/>
            <person name="Tacconi E."/>
            <person name="Takagi T."/>
            <person name="Takahashi H."/>
            <person name="Takemaru K."/>
            <person name="Takeuchi M."/>
            <person name="Tamakoshi A."/>
            <person name="Tanaka T."/>
            <person name="Terpstra P."/>
            <person name="Tognoni A."/>
            <person name="Tosato V."/>
            <person name="Uchiyama S."/>
            <person name="Vandenbol M."/>
            <person name="Vannier F."/>
            <person name="Vassarotti A."/>
            <person name="Viari A."/>
            <person name="Wambutt R."/>
            <person name="Wedler E."/>
            <person name="Wedler H."/>
            <person name="Weitzenegger T."/>
            <person name="Winters P."/>
            <person name="Wipat A."/>
            <person name="Yamamoto H."/>
            <person name="Yamane K."/>
            <person name="Yasumoto K."/>
            <person name="Yata K."/>
            <person name="Yoshida K."/>
            <person name="Yoshikawa H.-F."/>
            <person name="Zumstein E."/>
            <person name="Yoshikawa H."/>
            <person name="Danchin A."/>
        </authorList>
    </citation>
    <scope>NUCLEOTIDE SEQUENCE [LARGE SCALE GENOMIC DNA]</scope>
    <source>
        <strain>168</strain>
    </source>
</reference>
<reference key="3">
    <citation type="journal article" date="2003" name="J. Mol. Biol.">
        <title>Multifunctional xylooligosaccharide/cephalosporin C deacetylase revealed by the hexameric structure of the Bacillus subtilis enzyme at 1.9A resolution.</title>
        <authorList>
            <person name="Vincent F."/>
            <person name="Charnock S.J."/>
            <person name="Verschueren K.H."/>
            <person name="Turkenburg J.P."/>
            <person name="Scott D.J."/>
            <person name="Offen W.A."/>
            <person name="Roberts S."/>
            <person name="Pell G."/>
            <person name="Gilbert H.J."/>
            <person name="Davies G.J."/>
            <person name="Brannigan J.A."/>
        </authorList>
    </citation>
    <scope>X-RAY CRYSTALLOGRAPHY (1.7 ANGSTROMS) OF MUTANT ALA-181 IN COMPLEX WITH ACETATE</scope>
    <scope>CATALYTIC ACTIVITY</scope>
    <scope>BIOTECHNOLOGY</scope>
    <scope>SUBUNIT</scope>
    <scope>FUNCTION</scope>
    <scope>PROBABLE SUBCELLULAR LOCATION</scope>
</reference>
<reference key="4">
    <citation type="submission" date="2005-08" db="PDB data bank">
        <title>1.5A crystal structure of the cephalosporin C deacetylase.</title>
        <authorList>
            <consortium name="Midwest center for structural genomics (MCSG)"/>
        </authorList>
    </citation>
    <scope>X-RAY CRYSTALLOGRAPHY (1.5 ANGSTROMS)</scope>
    <scope>SUBUNIT</scope>
</reference>
<evidence type="ECO:0000269" key="1">
    <source>
    </source>
</evidence>
<evidence type="ECO:0000269" key="2">
    <source ref="4"/>
</evidence>
<evidence type="ECO:0000305" key="3"/>
<evidence type="ECO:0007829" key="4">
    <source>
        <dbReference type="PDB" id="1L7A"/>
    </source>
</evidence>
<evidence type="ECO:0007829" key="5">
    <source>
        <dbReference type="PDB" id="1ODT"/>
    </source>
</evidence>
<keyword id="KW-0002">3D-structure</keyword>
<keyword id="KW-0119">Carbohydrate metabolism</keyword>
<keyword id="KW-0136">Cellulose degradation</keyword>
<keyword id="KW-0963">Cytoplasm</keyword>
<keyword id="KW-0378">Hydrolase</keyword>
<keyword id="KW-0624">Polysaccharide degradation</keyword>
<keyword id="KW-1185">Reference proteome</keyword>
<keyword id="KW-0719">Serine esterase</keyword>
<organism>
    <name type="scientific">Bacillus subtilis (strain 168)</name>
    <dbReference type="NCBI Taxonomy" id="224308"/>
    <lineage>
        <taxon>Bacteria</taxon>
        <taxon>Bacillati</taxon>
        <taxon>Bacillota</taxon>
        <taxon>Bacilli</taxon>
        <taxon>Bacillales</taxon>
        <taxon>Bacillaceae</taxon>
        <taxon>Bacillus</taxon>
    </lineage>
</organism>
<accession>P94388</accession>
<accession>Q797Q7</accession>
<name>CAH_BACSU</name>